<reference key="1">
    <citation type="journal article" date="1994" name="Virology">
        <title>Cloning sequencing and expression of the gene encoding the VP2 protein of the human group B rotavirus, ADRV.</title>
        <authorList>
            <person name="Mackow E.R."/>
            <person name="Fay M.E."/>
            <person name="Shaw R."/>
            <person name="Tao H."/>
            <person name="Chen G."/>
        </authorList>
    </citation>
    <scope>NUCLEOTIDE SEQUENCE [GENOMIC RNA]</scope>
</reference>
<evidence type="ECO:0000255" key="1">
    <source>
        <dbReference type="HAMAP-Rule" id="MF_04123"/>
    </source>
</evidence>
<sequence length="933" mass="105635">MDSTVLVESAKTNIHGVDSKAEKQTIFDQLISDIKSQTDGQIPDEVLPDLQQLAEINGLTFEYKPKEKLSIMDHPDPTSVLSQDVFQIRTILSKTLFVDVENEDYSVYIPNDTAKLTPVLIDARPIQTYQPKALMHKDTAILPSHRDEISDQYGTDEILFDSHMFNDISQAQIRDFDTYILDKSIQIQNTLPNLEFISSLEKEVNPFNIHNTLCLNFGQKEYYNIIADRTNLSFQQRRQSVQFDNVIVDGVARTARVSLRLHPFDSQLLDIVRFNVIQDQPLADTLMEYQLVAADGFVATPKFRVDRDARLIADVRSPVMARLCELSPFFHRTRILSSMTDFTPLWKVNVFSSSIDNAKDAIYRMAEISFTVADATTSALASVNVASAQQTLLTLLNLSLFRFEIDPTGSQSNFGSAVSAALMLIVFPTDEQSMSNITFDNLCNLVFNELIAWTVDRPTFVKRTGMTNAFEANVNIGGGNMTRDIIAYMRFVLLRRPWAVFQRTYDDRYVSDIMVPNIDEANVNDQCYVAINNLFNGLIQAAQRNPNPGRQIAATSFRKLLKSMKDSCCNRIIPLIRLLKYNIERIARVYRFFPYTADLVHVIPAFRDERLRVKVPVSGMLSIALGINKAPDSFDWYNLLKFADVVRTKNFADQSLESIMVHALIRNDINPARSKKDYIQQNIKPATNVVASLSKLPSATFTTILADRMLNNEIRRTQSYVVTNRIRDAVRAAFEHVPTAEHGIAKGALLLPIPQNFQRSSVYVRKDNILYDPPVGVDRFNLSDLLDGRFYQGLINRVQNMAPFVISGPLQVKPSDASAIESVTSAYLTMSSPYDACVRPEDLRHNRVVHPPTVDYFSDASITRPNTQFEQLMSKTSVFVIDAPRLIVQNDATVYTFDYKDIQLTTSVVDKLEFTSVKTPDVTLFNGMLVYED</sequence>
<proteinExistence type="inferred from homology"/>
<accession>Q86195</accession>
<comment type="function">
    <text evidence="1">Inner capsid protein that self-assembles to form an icosahedral capsid with a T=2 symmetry, which consists of 120 copies of VP2, with channels at each of its five-fold vertices. This capsid constitutes the innermost concentric layer of the viral mature particle. It encapsidates the polymerase VP1, the capping enzyme VP3 and the genomic dsRNA, thereby defining the core. The innermost VP2 capsid and the intermediate VP6 capsid remain intact following cell entry to protect the dsRNA from degradation and to prevent unfavorable antiviral responses in the host cell during all the replication cycle of the virus. Nascent transcripts are transcribed within the structural confines of this double-layered particle (DLP) and are extruded through the channels formed by VP2 N-termini. VP2 is required for the replicase activity of VP1 polymerase. Probably recruits a copy of a VP1-VP3 complex, potentially along with a segment of plus-strand RNA, as a decamer of VP2 assembles. May activate the autoinhibited VP1/RNA complex to coordinate packaging and genome replication.</text>
</comment>
<comment type="subunit">
    <text evidence="1">Homodecamer; each decamer is made up of two conformers of VP2, called VP2A and VP2B. Interacts with a VP1-VP3 complex. Interacts with the intermediate capsid protein VP6. Interacts with NSP5. Interacts (via N-terminus) with NSP2.</text>
</comment>
<comment type="subcellular location">
    <subcellularLocation>
        <location evidence="1">Virion</location>
    </subcellularLocation>
    <text evidence="1">Inner capsid protein. Also found in spherical cytoplasmic structures, called virus factories, that appear early after infection and are the site of viral replication and packaging.</text>
</comment>
<comment type="similarity">
    <text evidence="1">Belongs to the rotavirus VP2 family.</text>
</comment>
<protein>
    <recommendedName>
        <fullName evidence="1">Inner capsid protein VP2</fullName>
    </recommendedName>
</protein>
<dbReference type="EMBL" id="M91433">
    <property type="protein sequence ID" value="AAA47350.1"/>
    <property type="molecule type" value="Genomic_RNA"/>
</dbReference>
<dbReference type="GO" id="GO:0039616">
    <property type="term" value="C:T=2 icosahedral viral capsid"/>
    <property type="evidence" value="ECO:0007669"/>
    <property type="project" value="UniProtKB-UniRule"/>
</dbReference>
<dbReference type="GO" id="GO:0039625">
    <property type="term" value="C:viral inner capsid"/>
    <property type="evidence" value="ECO:0007669"/>
    <property type="project" value="UniProtKB-UniRule"/>
</dbReference>
<dbReference type="GO" id="GO:0019013">
    <property type="term" value="C:viral nucleocapsid"/>
    <property type="evidence" value="ECO:0007669"/>
    <property type="project" value="UniProtKB-UniRule"/>
</dbReference>
<dbReference type="GO" id="GO:0003723">
    <property type="term" value="F:RNA binding"/>
    <property type="evidence" value="ECO:0007669"/>
    <property type="project" value="UniProtKB-UniRule"/>
</dbReference>
<dbReference type="HAMAP" id="MF_04123">
    <property type="entry name" value="Rota_VP2"/>
    <property type="match status" value="1"/>
</dbReference>
<dbReference type="InterPro" id="IPR007779">
    <property type="entry name" value="Rotavirus_VP2"/>
</dbReference>
<keyword id="KW-0167">Capsid protein</keyword>
<keyword id="KW-1153">Inner capsid protein</keyword>
<keyword id="KW-0694">RNA-binding</keyword>
<keyword id="KW-1141">T=2 icosahedral capsid protein</keyword>
<keyword id="KW-0946">Virion</keyword>
<feature type="chain" id="PRO_0000369832" description="Inner capsid protein VP2">
    <location>
        <begin position="1"/>
        <end position="933"/>
    </location>
</feature>
<organism>
    <name type="scientific">Rotavirus B (isolate RVB/Human/China/ADRV/1982)</name>
    <name type="common">RV-B</name>
    <name type="synonym">Rotavirus B (isolate adult diarrhea rotavirus)</name>
    <dbReference type="NCBI Taxonomy" id="10942"/>
    <lineage>
        <taxon>Viruses</taxon>
        <taxon>Riboviria</taxon>
        <taxon>Orthornavirae</taxon>
        <taxon>Duplornaviricota</taxon>
        <taxon>Resentoviricetes</taxon>
        <taxon>Reovirales</taxon>
        <taxon>Sedoreoviridae</taxon>
        <taxon>Rotavirus</taxon>
        <taxon>Rotavirus B</taxon>
    </lineage>
</organism>
<name>VP2_ROTGA</name>
<organismHost>
    <name type="scientific">Homo sapiens</name>
    <name type="common">Human</name>
    <dbReference type="NCBI Taxonomy" id="9606"/>
</organismHost>